<reference key="1">
    <citation type="journal article" date="2009" name="PLoS Genet.">
        <title>Organised genome dynamics in the Escherichia coli species results in highly diverse adaptive paths.</title>
        <authorList>
            <person name="Touchon M."/>
            <person name="Hoede C."/>
            <person name="Tenaillon O."/>
            <person name="Barbe V."/>
            <person name="Baeriswyl S."/>
            <person name="Bidet P."/>
            <person name="Bingen E."/>
            <person name="Bonacorsi S."/>
            <person name="Bouchier C."/>
            <person name="Bouvet O."/>
            <person name="Calteau A."/>
            <person name="Chiapello H."/>
            <person name="Clermont O."/>
            <person name="Cruveiller S."/>
            <person name="Danchin A."/>
            <person name="Diard M."/>
            <person name="Dossat C."/>
            <person name="Karoui M.E."/>
            <person name="Frapy E."/>
            <person name="Garry L."/>
            <person name="Ghigo J.M."/>
            <person name="Gilles A.M."/>
            <person name="Johnson J."/>
            <person name="Le Bouguenec C."/>
            <person name="Lescat M."/>
            <person name="Mangenot S."/>
            <person name="Martinez-Jehanne V."/>
            <person name="Matic I."/>
            <person name="Nassif X."/>
            <person name="Oztas S."/>
            <person name="Petit M.A."/>
            <person name="Pichon C."/>
            <person name="Rouy Z."/>
            <person name="Ruf C.S."/>
            <person name="Schneider D."/>
            <person name="Tourret J."/>
            <person name="Vacherie B."/>
            <person name="Vallenet D."/>
            <person name="Medigue C."/>
            <person name="Rocha E.P.C."/>
            <person name="Denamur E."/>
        </authorList>
    </citation>
    <scope>NUCLEOTIDE SEQUENCE [LARGE SCALE GENOMIC DNA]</scope>
    <source>
        <strain>IAI39 / ExPEC</strain>
    </source>
</reference>
<protein>
    <recommendedName>
        <fullName evidence="1">UPF0306 protein YhbP</fullName>
    </recommendedName>
</protein>
<name>YHBP_ECO7I</name>
<feature type="chain" id="PRO_1000198357" description="UPF0306 protein YhbP">
    <location>
        <begin position="1"/>
        <end position="147"/>
    </location>
</feature>
<dbReference type="EMBL" id="CU928164">
    <property type="protein sequence ID" value="CAR19767.1"/>
    <property type="molecule type" value="Genomic_DNA"/>
</dbReference>
<dbReference type="RefSeq" id="WP_000449464.1">
    <property type="nucleotide sequence ID" value="NC_011750.1"/>
</dbReference>
<dbReference type="RefSeq" id="YP_002409554.1">
    <property type="nucleotide sequence ID" value="NC_011750.1"/>
</dbReference>
<dbReference type="SMR" id="B7NKM3"/>
<dbReference type="STRING" id="585057.ECIAI39_3651"/>
<dbReference type="KEGG" id="ect:ECIAI39_3651"/>
<dbReference type="PATRIC" id="fig|585057.6.peg.3784"/>
<dbReference type="HOGENOM" id="CLU_105087_3_0_6"/>
<dbReference type="Proteomes" id="UP000000749">
    <property type="component" value="Chromosome"/>
</dbReference>
<dbReference type="FunFam" id="2.30.110.10:FF:000003">
    <property type="entry name" value="UPF0306 protein YhbP"/>
    <property type="match status" value="1"/>
</dbReference>
<dbReference type="Gene3D" id="2.30.110.10">
    <property type="entry name" value="Electron Transport, Fmn-binding Protein, Chain A"/>
    <property type="match status" value="1"/>
</dbReference>
<dbReference type="HAMAP" id="MF_00764">
    <property type="entry name" value="UPF0306"/>
    <property type="match status" value="1"/>
</dbReference>
<dbReference type="InterPro" id="IPR012349">
    <property type="entry name" value="Split_barrel_FMN-bd"/>
</dbReference>
<dbReference type="InterPro" id="IPR011194">
    <property type="entry name" value="UPF0306"/>
</dbReference>
<dbReference type="NCBIfam" id="NF002900">
    <property type="entry name" value="PRK03467.1"/>
    <property type="match status" value="1"/>
</dbReference>
<dbReference type="PIRSF" id="PIRSF009554">
    <property type="entry name" value="UCP009554"/>
    <property type="match status" value="1"/>
</dbReference>
<dbReference type="SUPFAM" id="SSF50475">
    <property type="entry name" value="FMN-binding split barrel"/>
    <property type="match status" value="1"/>
</dbReference>
<organism>
    <name type="scientific">Escherichia coli O7:K1 (strain IAI39 / ExPEC)</name>
    <dbReference type="NCBI Taxonomy" id="585057"/>
    <lineage>
        <taxon>Bacteria</taxon>
        <taxon>Pseudomonadati</taxon>
        <taxon>Pseudomonadota</taxon>
        <taxon>Gammaproteobacteria</taxon>
        <taxon>Enterobacterales</taxon>
        <taxon>Enterobacteriaceae</taxon>
        <taxon>Escherichia</taxon>
    </lineage>
</organism>
<evidence type="ECO:0000255" key="1">
    <source>
        <dbReference type="HAMAP-Rule" id="MF_00764"/>
    </source>
</evidence>
<comment type="similarity">
    <text evidence="1">Belongs to the UPF0306 family.</text>
</comment>
<accession>B7NKM3</accession>
<proteinExistence type="inferred from homology"/>
<gene>
    <name evidence="1" type="primary">yhbP</name>
    <name type="ordered locus">ECIAI39_3651</name>
</gene>
<sequence>METLTAISRWLEKQHVVTWCVQQEGELWCANAFYLFDTQKVAFYILTEEKTRHAQMSGPQAAVAGTVNGQPKTVALIRGVQFKGEIRRLEGEESDLARQAYNRRFPVARMLSAPVWEIRLDEIKFTDNTLGFGKKMIWLRNSGTEQA</sequence>